<reference key="1">
    <citation type="journal article" date="2002" name="Proc. Natl. Acad. Sci. U.S.A.">
        <title>Complete genome sequence of Clostridium perfringens, an anaerobic flesh-eater.</title>
        <authorList>
            <person name="Shimizu T."/>
            <person name="Ohtani K."/>
            <person name="Hirakawa H."/>
            <person name="Ohshima K."/>
            <person name="Yamashita A."/>
            <person name="Shiba T."/>
            <person name="Ogasawara N."/>
            <person name="Hattori M."/>
            <person name="Kuhara S."/>
            <person name="Hayashi H."/>
        </authorList>
    </citation>
    <scope>NUCLEOTIDE SEQUENCE [LARGE SCALE GENOMIC DNA]</scope>
    <source>
        <strain>13 / Type A</strain>
    </source>
</reference>
<organism>
    <name type="scientific">Clostridium perfringens (strain 13 / Type A)</name>
    <dbReference type="NCBI Taxonomy" id="195102"/>
    <lineage>
        <taxon>Bacteria</taxon>
        <taxon>Bacillati</taxon>
        <taxon>Bacillota</taxon>
        <taxon>Clostridia</taxon>
        <taxon>Eubacteriales</taxon>
        <taxon>Clostridiaceae</taxon>
        <taxon>Clostridium</taxon>
    </lineage>
</organism>
<protein>
    <recommendedName>
        <fullName evidence="1">Putative 3-methyladenine DNA glycosylase</fullName>
        <ecNumber evidence="1">3.2.2.-</ecNumber>
    </recommendedName>
</protein>
<name>3MGH_CLOPE</name>
<proteinExistence type="inferred from homology"/>
<evidence type="ECO:0000255" key="1">
    <source>
        <dbReference type="HAMAP-Rule" id="MF_00527"/>
    </source>
</evidence>
<sequence length="205" mass="23310">MRLGRDFYNRDTVTVAKELLGKVLVRNINGVTLKGKIVETEAYIGAIDKASHAYGGKRTNRTETLYADPGTVYVYIIYGMYHCLNLISEEKDVAGGVLIRGIEPLEGIEEMSKLRYKKSYEELSNYEKKNFSNGPSKLCMALGIDKGENGINTISSEEIYVEDDSLIKKDFSIVEAKRIGIDYAEEARDFLWRFYIKDNKFVSKK</sequence>
<keyword id="KW-0227">DNA damage</keyword>
<keyword id="KW-0234">DNA repair</keyword>
<keyword id="KW-0378">Hydrolase</keyword>
<keyword id="KW-1185">Reference proteome</keyword>
<accession>Q8XHA9</accession>
<dbReference type="EC" id="3.2.2.-" evidence="1"/>
<dbReference type="EMBL" id="BA000016">
    <property type="protein sequence ID" value="BAB82282.1"/>
    <property type="molecule type" value="Genomic_DNA"/>
</dbReference>
<dbReference type="RefSeq" id="WP_003467933.1">
    <property type="nucleotide sequence ID" value="NC_003366.1"/>
</dbReference>
<dbReference type="SMR" id="Q8XHA9"/>
<dbReference type="STRING" id="195102.gene:10491910"/>
<dbReference type="KEGG" id="cpe:CPE2576"/>
<dbReference type="HOGENOM" id="CLU_060471_0_2_9"/>
<dbReference type="Proteomes" id="UP000000818">
    <property type="component" value="Chromosome"/>
</dbReference>
<dbReference type="GO" id="GO:0003905">
    <property type="term" value="F:alkylbase DNA N-glycosylase activity"/>
    <property type="evidence" value="ECO:0007669"/>
    <property type="project" value="InterPro"/>
</dbReference>
<dbReference type="GO" id="GO:0003677">
    <property type="term" value="F:DNA binding"/>
    <property type="evidence" value="ECO:0007669"/>
    <property type="project" value="InterPro"/>
</dbReference>
<dbReference type="GO" id="GO:0006284">
    <property type="term" value="P:base-excision repair"/>
    <property type="evidence" value="ECO:0007669"/>
    <property type="project" value="InterPro"/>
</dbReference>
<dbReference type="CDD" id="cd00540">
    <property type="entry name" value="AAG"/>
    <property type="match status" value="1"/>
</dbReference>
<dbReference type="FunFam" id="3.10.300.10:FF:000001">
    <property type="entry name" value="Putative 3-methyladenine DNA glycosylase"/>
    <property type="match status" value="1"/>
</dbReference>
<dbReference type="Gene3D" id="3.10.300.10">
    <property type="entry name" value="Methylpurine-DNA glycosylase (MPG)"/>
    <property type="match status" value="1"/>
</dbReference>
<dbReference type="HAMAP" id="MF_00527">
    <property type="entry name" value="3MGH"/>
    <property type="match status" value="1"/>
</dbReference>
<dbReference type="InterPro" id="IPR011034">
    <property type="entry name" value="Formyl_transferase-like_C_sf"/>
</dbReference>
<dbReference type="InterPro" id="IPR003180">
    <property type="entry name" value="MPG"/>
</dbReference>
<dbReference type="InterPro" id="IPR036995">
    <property type="entry name" value="MPG_sf"/>
</dbReference>
<dbReference type="NCBIfam" id="TIGR00567">
    <property type="entry name" value="3mg"/>
    <property type="match status" value="1"/>
</dbReference>
<dbReference type="NCBIfam" id="NF002001">
    <property type="entry name" value="PRK00802.1-1"/>
    <property type="match status" value="1"/>
</dbReference>
<dbReference type="PANTHER" id="PTHR10429">
    <property type="entry name" value="DNA-3-METHYLADENINE GLYCOSYLASE"/>
    <property type="match status" value="1"/>
</dbReference>
<dbReference type="PANTHER" id="PTHR10429:SF0">
    <property type="entry name" value="DNA-3-METHYLADENINE GLYCOSYLASE"/>
    <property type="match status" value="1"/>
</dbReference>
<dbReference type="Pfam" id="PF02245">
    <property type="entry name" value="Pur_DNA_glyco"/>
    <property type="match status" value="1"/>
</dbReference>
<dbReference type="SUPFAM" id="SSF50486">
    <property type="entry name" value="FMT C-terminal domain-like"/>
    <property type="match status" value="1"/>
</dbReference>
<feature type="chain" id="PRO_0000100080" description="Putative 3-methyladenine DNA glycosylase">
    <location>
        <begin position="1"/>
        <end position="205"/>
    </location>
</feature>
<gene>
    <name type="ordered locus">CPE2576</name>
</gene>
<comment type="similarity">
    <text evidence="1">Belongs to the DNA glycosylase MPG family.</text>
</comment>